<gene>
    <name evidence="5" type="primary">SclA</name>
    <name type="ORF">CG45090</name>
</gene>
<sequence>MSEARNLFTTFGILAILLFFLYLIYAVL</sequence>
<feature type="chain" id="PRO_0000426725" description="Sarcolamban A">
    <location>
        <begin position="1"/>
        <end position="28"/>
    </location>
</feature>
<feature type="transmembrane region" description="Helical" evidence="1">
    <location>
        <begin position="7"/>
        <end position="27"/>
    </location>
</feature>
<comment type="function">
    <text evidence="2">Plays an essential role in the regulation of calcium transport at the sarcoplasmic reticulum (SR), which is secondarily required for regular muscle contraction.</text>
</comment>
<comment type="subunit">
    <text evidence="2">Interacts with SERCA.</text>
</comment>
<comment type="subcellular location">
    <subcellularLocation>
        <location evidence="2">Sarcoplasmic reticulum membrane</location>
        <topology evidence="2">Single-pass membrane protein</topology>
    </subcellularLocation>
    <subcellularLocation>
        <location evidence="2">Cell membrane</location>
        <location evidence="2">Sarcolemma</location>
        <location evidence="2">T-tubule</location>
    </subcellularLocation>
    <text evidence="2">Colocalizes with SERCA at the sarcoplasmic reticulum and the diad, a structure composed of a single t-tubule paired with a terminal cisterna of the sarcoplasmic reticulum.</text>
</comment>
<comment type="tissue specificity">
    <text evidence="2">Strongly expressed in embryonic and larval somatic muscles and postembryonic heart.</text>
</comment>
<comment type="disruption phenotype">
    <text evidence="2">SclA and SclB double mutants show arrhythmic cardiac contractions and correspondingly, cardiac cells show irregular action potentials (APs), involving double and occasionally failed APs. Calcium transients in these mutants show higher amplitudes and steeper decay than those in wild type flies.</text>
</comment>
<comment type="miscellaneous">
    <text evidence="3">This protein is produced by a bicistronic gene which also produces the SclB protein from a non-overlapping reading frame.</text>
</comment>
<comment type="sequence caution" evidence="3">
    <conflict type="erroneous translation">
        <sequence resource="EMBL-CDS" id="AAL48870"/>
    </conflict>
    <text>Wrong choice of frame.</text>
</comment>
<protein>
    <recommendedName>
        <fullName evidence="5">Sarcolamban A</fullName>
    </recommendedName>
</protein>
<dbReference type="EMBL" id="AE014134">
    <property type="protein sequence ID" value="AHN54508.1"/>
    <property type="molecule type" value="Genomic_DNA"/>
</dbReference>
<dbReference type="EMBL" id="AE014134">
    <property type="protein sequence ID" value="AHN54509.1"/>
    <property type="molecule type" value="Genomic_DNA"/>
</dbReference>
<dbReference type="EMBL" id="AE014134">
    <property type="protein sequence ID" value="AHN54510.1"/>
    <property type="molecule type" value="Genomic_DNA"/>
</dbReference>
<dbReference type="EMBL" id="AY071248">
    <property type="protein sequence ID" value="AAL48870.1"/>
    <property type="status" value="ALT_SEQ"/>
    <property type="molecule type" value="mRNA"/>
</dbReference>
<dbReference type="RefSeq" id="NP_001285994.1">
    <property type="nucleotide sequence ID" value="NM_001299065.1"/>
</dbReference>
<dbReference type="RefSeq" id="NP_001285995.1">
    <property type="nucleotide sequence ID" value="NM_001299066.1"/>
</dbReference>
<dbReference type="RefSeq" id="NP_001285996.1">
    <property type="nucleotide sequence ID" value="NM_001299067.1"/>
</dbReference>
<dbReference type="BioGRID" id="2594454">
    <property type="interactions" value="2"/>
</dbReference>
<dbReference type="DIP" id="DIP-61732N"/>
<dbReference type="FunCoup" id="C0HJH4">
    <property type="interactions" value="3"/>
</dbReference>
<dbReference type="IntAct" id="C0HJH4">
    <property type="interactions" value="1"/>
</dbReference>
<dbReference type="STRING" id="7227.FBpp0310895"/>
<dbReference type="TCDB" id="8.A.199.1.1">
    <property type="family name" value="the sarcolamban (sarcolamban) family"/>
</dbReference>
<dbReference type="EnsemblMetazoa" id="FBtr0344543">
    <property type="protein sequence ID" value="FBpp0310895"/>
    <property type="gene ID" value="FBgn0266491"/>
</dbReference>
<dbReference type="EnsemblMetazoa" id="FBtr0344544">
    <property type="protein sequence ID" value="FBpp0310896"/>
    <property type="gene ID" value="FBgn0266491"/>
</dbReference>
<dbReference type="EnsemblMetazoa" id="FBtr0344545">
    <property type="protein sequence ID" value="FBpp0310897"/>
    <property type="gene ID" value="FBgn0266491"/>
</dbReference>
<dbReference type="GeneID" id="19835657"/>
<dbReference type="KEGG" id="dme:Dmel_CG45090"/>
<dbReference type="AGR" id="FB:FBgn0266491"/>
<dbReference type="CTD" id="19835657"/>
<dbReference type="FlyBase" id="FBgn0266491">
    <property type="gene designation" value="SclA"/>
</dbReference>
<dbReference type="VEuPathDB" id="VectorBase:FBgn0266491"/>
<dbReference type="HOGENOM" id="CLU_221518_0_0_1"/>
<dbReference type="InParanoid" id="C0HJH4"/>
<dbReference type="BioGRID-ORCS" id="19835657">
    <property type="hits" value="0 hits in 1 CRISPR screen"/>
</dbReference>
<dbReference type="GenomeRNAi" id="19835657"/>
<dbReference type="PRO" id="PR:C0HJH4"/>
<dbReference type="Proteomes" id="UP000000803">
    <property type="component" value="Chromosome 2L"/>
</dbReference>
<dbReference type="Bgee" id="FBgn0266491">
    <property type="expression patterns" value="Expressed in larva and 11 other cell types or tissues"/>
</dbReference>
<dbReference type="GO" id="GO:0033017">
    <property type="term" value="C:sarcoplasmic reticulum membrane"/>
    <property type="evidence" value="ECO:0007669"/>
    <property type="project" value="UniProtKB-SubCell"/>
</dbReference>
<dbReference type="GO" id="GO:0030315">
    <property type="term" value="C:T-tubule"/>
    <property type="evidence" value="ECO:0000314"/>
    <property type="project" value="FlyBase"/>
</dbReference>
<dbReference type="GO" id="GO:0055117">
    <property type="term" value="P:regulation of cardiac muscle contraction"/>
    <property type="evidence" value="ECO:0000315"/>
    <property type="project" value="FlyBase"/>
</dbReference>
<dbReference type="CDD" id="cd20274">
    <property type="entry name" value="Sarcolamban"/>
    <property type="match status" value="1"/>
</dbReference>
<dbReference type="InterPro" id="IPR054083">
    <property type="entry name" value="SclA/B"/>
</dbReference>
<dbReference type="Pfam" id="PF21898">
    <property type="entry name" value="Sarcolamban"/>
    <property type="match status" value="1"/>
</dbReference>
<accession>C0HJH4</accession>
<accession>Q8SYY2</accession>
<accession>X2JEE2</accession>
<name>SLCA_DROME</name>
<organism>
    <name type="scientific">Drosophila melanogaster</name>
    <name type="common">Fruit fly</name>
    <dbReference type="NCBI Taxonomy" id="7227"/>
    <lineage>
        <taxon>Eukaryota</taxon>
        <taxon>Metazoa</taxon>
        <taxon>Ecdysozoa</taxon>
        <taxon>Arthropoda</taxon>
        <taxon>Hexapoda</taxon>
        <taxon>Insecta</taxon>
        <taxon>Pterygota</taxon>
        <taxon>Neoptera</taxon>
        <taxon>Endopterygota</taxon>
        <taxon>Diptera</taxon>
        <taxon>Brachycera</taxon>
        <taxon>Muscomorpha</taxon>
        <taxon>Ephydroidea</taxon>
        <taxon>Drosophilidae</taxon>
        <taxon>Drosophila</taxon>
        <taxon>Sophophora</taxon>
    </lineage>
</organism>
<reference key="1">
    <citation type="journal article" date="2000" name="Science">
        <title>The genome sequence of Drosophila melanogaster.</title>
        <authorList>
            <person name="Adams M.D."/>
            <person name="Celniker S.E."/>
            <person name="Holt R.A."/>
            <person name="Evans C.A."/>
            <person name="Gocayne J.D."/>
            <person name="Amanatides P.G."/>
            <person name="Scherer S.E."/>
            <person name="Li P.W."/>
            <person name="Hoskins R.A."/>
            <person name="Galle R.F."/>
            <person name="George R.A."/>
            <person name="Lewis S.E."/>
            <person name="Richards S."/>
            <person name="Ashburner M."/>
            <person name="Henderson S.N."/>
            <person name="Sutton G.G."/>
            <person name="Wortman J.R."/>
            <person name="Yandell M.D."/>
            <person name="Zhang Q."/>
            <person name="Chen L.X."/>
            <person name="Brandon R.C."/>
            <person name="Rogers Y.-H.C."/>
            <person name="Blazej R.G."/>
            <person name="Champe M."/>
            <person name="Pfeiffer B.D."/>
            <person name="Wan K.H."/>
            <person name="Doyle C."/>
            <person name="Baxter E.G."/>
            <person name="Helt G."/>
            <person name="Nelson C.R."/>
            <person name="Miklos G.L.G."/>
            <person name="Abril J.F."/>
            <person name="Agbayani A."/>
            <person name="An H.-J."/>
            <person name="Andrews-Pfannkoch C."/>
            <person name="Baldwin D."/>
            <person name="Ballew R.M."/>
            <person name="Basu A."/>
            <person name="Baxendale J."/>
            <person name="Bayraktaroglu L."/>
            <person name="Beasley E.M."/>
            <person name="Beeson K.Y."/>
            <person name="Benos P.V."/>
            <person name="Berman B.P."/>
            <person name="Bhandari D."/>
            <person name="Bolshakov S."/>
            <person name="Borkova D."/>
            <person name="Botchan M.R."/>
            <person name="Bouck J."/>
            <person name="Brokstein P."/>
            <person name="Brottier P."/>
            <person name="Burtis K.C."/>
            <person name="Busam D.A."/>
            <person name="Butler H."/>
            <person name="Cadieu E."/>
            <person name="Center A."/>
            <person name="Chandra I."/>
            <person name="Cherry J.M."/>
            <person name="Cawley S."/>
            <person name="Dahlke C."/>
            <person name="Davenport L.B."/>
            <person name="Davies P."/>
            <person name="de Pablos B."/>
            <person name="Delcher A."/>
            <person name="Deng Z."/>
            <person name="Mays A.D."/>
            <person name="Dew I."/>
            <person name="Dietz S.M."/>
            <person name="Dodson K."/>
            <person name="Doup L.E."/>
            <person name="Downes M."/>
            <person name="Dugan-Rocha S."/>
            <person name="Dunkov B.C."/>
            <person name="Dunn P."/>
            <person name="Durbin K.J."/>
            <person name="Evangelista C.C."/>
            <person name="Ferraz C."/>
            <person name="Ferriera S."/>
            <person name="Fleischmann W."/>
            <person name="Fosler C."/>
            <person name="Gabrielian A.E."/>
            <person name="Garg N.S."/>
            <person name="Gelbart W.M."/>
            <person name="Glasser K."/>
            <person name="Glodek A."/>
            <person name="Gong F."/>
            <person name="Gorrell J.H."/>
            <person name="Gu Z."/>
            <person name="Guan P."/>
            <person name="Harris M."/>
            <person name="Harris N.L."/>
            <person name="Harvey D.A."/>
            <person name="Heiman T.J."/>
            <person name="Hernandez J.R."/>
            <person name="Houck J."/>
            <person name="Hostin D."/>
            <person name="Houston K.A."/>
            <person name="Howland T.J."/>
            <person name="Wei M.-H."/>
            <person name="Ibegwam C."/>
            <person name="Jalali M."/>
            <person name="Kalush F."/>
            <person name="Karpen G.H."/>
            <person name="Ke Z."/>
            <person name="Kennison J.A."/>
            <person name="Ketchum K.A."/>
            <person name="Kimmel B.E."/>
            <person name="Kodira C.D."/>
            <person name="Kraft C.L."/>
            <person name="Kravitz S."/>
            <person name="Kulp D."/>
            <person name="Lai Z."/>
            <person name="Lasko P."/>
            <person name="Lei Y."/>
            <person name="Levitsky A.A."/>
            <person name="Li J.H."/>
            <person name="Li Z."/>
            <person name="Liang Y."/>
            <person name="Lin X."/>
            <person name="Liu X."/>
            <person name="Mattei B."/>
            <person name="McIntosh T.C."/>
            <person name="McLeod M.P."/>
            <person name="McPherson D."/>
            <person name="Merkulov G."/>
            <person name="Milshina N.V."/>
            <person name="Mobarry C."/>
            <person name="Morris J."/>
            <person name="Moshrefi A."/>
            <person name="Mount S.M."/>
            <person name="Moy M."/>
            <person name="Murphy B."/>
            <person name="Murphy L."/>
            <person name="Muzny D.M."/>
            <person name="Nelson D.L."/>
            <person name="Nelson D.R."/>
            <person name="Nelson K.A."/>
            <person name="Nixon K."/>
            <person name="Nusskern D.R."/>
            <person name="Pacleb J.M."/>
            <person name="Palazzolo M."/>
            <person name="Pittman G.S."/>
            <person name="Pan S."/>
            <person name="Pollard J."/>
            <person name="Puri V."/>
            <person name="Reese M.G."/>
            <person name="Reinert K."/>
            <person name="Remington K."/>
            <person name="Saunders R.D.C."/>
            <person name="Scheeler F."/>
            <person name="Shen H."/>
            <person name="Shue B.C."/>
            <person name="Siden-Kiamos I."/>
            <person name="Simpson M."/>
            <person name="Skupski M.P."/>
            <person name="Smith T.J."/>
            <person name="Spier E."/>
            <person name="Spradling A.C."/>
            <person name="Stapleton M."/>
            <person name="Strong R."/>
            <person name="Sun E."/>
            <person name="Svirskas R."/>
            <person name="Tector C."/>
            <person name="Turner R."/>
            <person name="Venter E."/>
            <person name="Wang A.H."/>
            <person name="Wang X."/>
            <person name="Wang Z.-Y."/>
            <person name="Wassarman D.A."/>
            <person name="Weinstock G.M."/>
            <person name="Weissenbach J."/>
            <person name="Williams S.M."/>
            <person name="Woodage T."/>
            <person name="Worley K.C."/>
            <person name="Wu D."/>
            <person name="Yang S."/>
            <person name="Yao Q.A."/>
            <person name="Ye J."/>
            <person name="Yeh R.-F."/>
            <person name="Zaveri J.S."/>
            <person name="Zhan M."/>
            <person name="Zhang G."/>
            <person name="Zhao Q."/>
            <person name="Zheng L."/>
            <person name="Zheng X.H."/>
            <person name="Zhong F.N."/>
            <person name="Zhong W."/>
            <person name="Zhou X."/>
            <person name="Zhu S.C."/>
            <person name="Zhu X."/>
            <person name="Smith H.O."/>
            <person name="Gibbs R.A."/>
            <person name="Myers E.W."/>
            <person name="Rubin G.M."/>
            <person name="Venter J.C."/>
        </authorList>
    </citation>
    <scope>NUCLEOTIDE SEQUENCE [LARGE SCALE GENOMIC DNA]</scope>
    <source>
        <strain>Berkeley</strain>
    </source>
</reference>
<reference key="2">
    <citation type="journal article" date="2002" name="Genome Biol.">
        <title>Annotation of the Drosophila melanogaster euchromatic genome: a systematic review.</title>
        <authorList>
            <person name="Misra S."/>
            <person name="Crosby M.A."/>
            <person name="Mungall C.J."/>
            <person name="Matthews B.B."/>
            <person name="Campbell K.S."/>
            <person name="Hradecky P."/>
            <person name="Huang Y."/>
            <person name="Kaminker J.S."/>
            <person name="Millburn G.H."/>
            <person name="Prochnik S.E."/>
            <person name="Smith C.D."/>
            <person name="Tupy J.L."/>
            <person name="Whitfield E.J."/>
            <person name="Bayraktaroglu L."/>
            <person name="Berman B.P."/>
            <person name="Bettencourt B.R."/>
            <person name="Celniker S.E."/>
            <person name="de Grey A.D.N.J."/>
            <person name="Drysdale R.A."/>
            <person name="Harris N.L."/>
            <person name="Richter J."/>
            <person name="Russo S."/>
            <person name="Schroeder A.J."/>
            <person name="Shu S.Q."/>
            <person name="Stapleton M."/>
            <person name="Yamada C."/>
            <person name="Ashburner M."/>
            <person name="Gelbart W.M."/>
            <person name="Rubin G.M."/>
            <person name="Lewis S.E."/>
        </authorList>
    </citation>
    <scope>GENOME REANNOTATION</scope>
    <source>
        <strain>Berkeley</strain>
    </source>
</reference>
<reference evidence="4" key="3">
    <citation type="submission" date="2001-12" db="EMBL/GenBank/DDBJ databases">
        <authorList>
            <person name="Stapleton M."/>
            <person name="Brokstein P."/>
            <person name="Hong L."/>
            <person name="Agbayani A."/>
            <person name="Carlson J."/>
            <person name="Champe M."/>
            <person name="Chavez C."/>
            <person name="Dorsett V."/>
            <person name="Dresnek D."/>
            <person name="Farfan D."/>
            <person name="Frise E."/>
            <person name="George R."/>
            <person name="Gonzalez M."/>
            <person name="Guarin H."/>
            <person name="Kronmiller B."/>
            <person name="Li P."/>
            <person name="Liao G."/>
            <person name="Miranda A."/>
            <person name="Mungall C.J."/>
            <person name="Nunoo J."/>
            <person name="Pacleb J."/>
            <person name="Paragas V."/>
            <person name="Park S."/>
            <person name="Patel S."/>
            <person name="Phouanenavong S."/>
            <person name="Wan K."/>
            <person name="Yu C."/>
            <person name="Lewis S.E."/>
            <person name="Rubin G.M."/>
            <person name="Celniker S."/>
        </authorList>
    </citation>
    <scope>NUCLEOTIDE SEQUENCE [LARGE SCALE MRNA]</scope>
    <source>
        <strain evidence="4">Berkeley</strain>
    </source>
</reference>
<reference evidence="3" key="4">
    <citation type="journal article" date="2013" name="Science">
        <title>Conserved regulation of cardiac calcium uptake by peptides encoded in small open reading frames.</title>
        <authorList>
            <person name="Magny E.G."/>
            <person name="Pueyo J.I."/>
            <person name="Pearl F.M."/>
            <person name="Cespedes M.A."/>
            <person name="Niven J.E."/>
            <person name="Bishop S.A."/>
            <person name="Couso J.P."/>
        </authorList>
    </citation>
    <scope>IDENTIFICATION</scope>
    <scope>FUNCTION</scope>
    <scope>INTERACTION WITH SERCA</scope>
    <scope>SUBCELLULAR LOCATION</scope>
    <scope>TISSUE SPECIFICITY</scope>
    <scope>DISRUPTION PHENOTYPE</scope>
</reference>
<evidence type="ECO:0000255" key="1"/>
<evidence type="ECO:0000269" key="2">
    <source>
    </source>
</evidence>
<evidence type="ECO:0000305" key="3"/>
<evidence type="ECO:0000312" key="4">
    <source>
        <dbReference type="EMBL" id="AAL48870.1"/>
    </source>
</evidence>
<evidence type="ECO:0000312" key="5">
    <source>
        <dbReference type="FlyBase" id="FBgn0266491"/>
    </source>
</evidence>
<proteinExistence type="evidence at protein level"/>
<keyword id="KW-1003">Cell membrane</keyword>
<keyword id="KW-0472">Membrane</keyword>
<keyword id="KW-1185">Reference proteome</keyword>
<keyword id="KW-0703">Sarcoplasmic reticulum</keyword>
<keyword id="KW-0812">Transmembrane</keyword>
<keyword id="KW-1133">Transmembrane helix</keyword>